<keyword id="KW-0012">Acyltransferase</keyword>
<keyword id="KW-0963">Cytoplasm</keyword>
<keyword id="KW-0441">Lipid A biosynthesis</keyword>
<keyword id="KW-0444">Lipid biosynthesis</keyword>
<keyword id="KW-0443">Lipid metabolism</keyword>
<keyword id="KW-1185">Reference proteome</keyword>
<keyword id="KW-0677">Repeat</keyword>
<keyword id="KW-0808">Transferase</keyword>
<gene>
    <name evidence="1" type="primary">lpxA</name>
    <name type="ordered locus">HI_1061</name>
</gene>
<comment type="function">
    <text evidence="1">Involved in the biosynthesis of lipid A, a phosphorylated glycolipid that anchors the lipopolysaccharide to the outer membrane of the cell.</text>
</comment>
<comment type="catalytic activity">
    <reaction evidence="1">
        <text>a (3R)-hydroxyacyl-[ACP] + UDP-N-acetyl-alpha-D-glucosamine = a UDP-3-O-[(3R)-3-hydroxyacyl]-N-acetyl-alpha-D-glucosamine + holo-[ACP]</text>
        <dbReference type="Rhea" id="RHEA:67812"/>
        <dbReference type="Rhea" id="RHEA-COMP:9685"/>
        <dbReference type="Rhea" id="RHEA-COMP:9945"/>
        <dbReference type="ChEBI" id="CHEBI:57705"/>
        <dbReference type="ChEBI" id="CHEBI:64479"/>
        <dbReference type="ChEBI" id="CHEBI:78827"/>
        <dbReference type="ChEBI" id="CHEBI:173225"/>
        <dbReference type="EC" id="2.3.1.129"/>
    </reaction>
</comment>
<comment type="pathway">
    <text evidence="1">Glycolipid biosynthesis; lipid IV(A) biosynthesis; lipid IV(A) from (3R)-3-hydroxytetradecanoyl-[acyl-carrier-protein] and UDP-N-acetyl-alpha-D-glucosamine: step 1/6.</text>
</comment>
<comment type="subunit">
    <text evidence="1">Homotrimer.</text>
</comment>
<comment type="subcellular location">
    <subcellularLocation>
        <location evidence="1">Cytoplasm</location>
    </subcellularLocation>
</comment>
<comment type="similarity">
    <text evidence="1">Belongs to the transferase hexapeptide repeat family. LpxA subfamily.</text>
</comment>
<dbReference type="EC" id="2.3.1.129" evidence="1"/>
<dbReference type="EMBL" id="L42023">
    <property type="protein sequence ID" value="AAC22716.1"/>
    <property type="molecule type" value="Genomic_DNA"/>
</dbReference>
<dbReference type="EMBL" id="X87416">
    <property type="protein sequence ID" value="CAA60865.1"/>
    <property type="molecule type" value="Genomic_DNA"/>
</dbReference>
<dbReference type="PIR" id="F64180">
    <property type="entry name" value="F64180"/>
</dbReference>
<dbReference type="RefSeq" id="NP_439219.1">
    <property type="nucleotide sequence ID" value="NC_000907.1"/>
</dbReference>
<dbReference type="SMR" id="P43887"/>
<dbReference type="STRING" id="71421.HI_1061"/>
<dbReference type="EnsemblBacteria" id="AAC22716">
    <property type="protein sequence ID" value="AAC22716"/>
    <property type="gene ID" value="HI_1061"/>
</dbReference>
<dbReference type="KEGG" id="hin:HI_1061"/>
<dbReference type="PATRIC" id="fig|71421.8.peg.1105"/>
<dbReference type="eggNOG" id="COG1043">
    <property type="taxonomic scope" value="Bacteria"/>
</dbReference>
<dbReference type="HOGENOM" id="CLU_061249_0_0_6"/>
<dbReference type="OrthoDB" id="9807278at2"/>
<dbReference type="PhylomeDB" id="P43887"/>
<dbReference type="BioCyc" id="HINF71421:G1GJ1-1098-MONOMER"/>
<dbReference type="UniPathway" id="UPA00359">
    <property type="reaction ID" value="UER00477"/>
</dbReference>
<dbReference type="Proteomes" id="UP000000579">
    <property type="component" value="Chromosome"/>
</dbReference>
<dbReference type="GO" id="GO:0005737">
    <property type="term" value="C:cytoplasm"/>
    <property type="evidence" value="ECO:0007669"/>
    <property type="project" value="UniProtKB-SubCell"/>
</dbReference>
<dbReference type="GO" id="GO:0016020">
    <property type="term" value="C:membrane"/>
    <property type="evidence" value="ECO:0007669"/>
    <property type="project" value="GOC"/>
</dbReference>
<dbReference type="GO" id="GO:0008780">
    <property type="term" value="F:acyl-[acyl-carrier-protein]-UDP-N-acetylglucosamine O-acyltransferase activity"/>
    <property type="evidence" value="ECO:0007669"/>
    <property type="project" value="UniProtKB-UniRule"/>
</dbReference>
<dbReference type="GO" id="GO:0009245">
    <property type="term" value="P:lipid A biosynthetic process"/>
    <property type="evidence" value="ECO:0007669"/>
    <property type="project" value="UniProtKB-UniRule"/>
</dbReference>
<dbReference type="CDD" id="cd03351">
    <property type="entry name" value="LbH_UDP-GlcNAc_AT"/>
    <property type="match status" value="1"/>
</dbReference>
<dbReference type="FunFam" id="2.160.10.10:FF:000003">
    <property type="entry name" value="Acyl-[acyl-carrier-protein]--UDP-N-acetylglucosamine O-acyltransferase"/>
    <property type="match status" value="1"/>
</dbReference>
<dbReference type="Gene3D" id="2.160.10.10">
    <property type="entry name" value="Hexapeptide repeat proteins"/>
    <property type="match status" value="1"/>
</dbReference>
<dbReference type="Gene3D" id="1.20.1180.10">
    <property type="entry name" value="Udp N-acetylglucosamine O-acyltransferase, C-terminal domain"/>
    <property type="match status" value="1"/>
</dbReference>
<dbReference type="HAMAP" id="MF_00387">
    <property type="entry name" value="LpxA"/>
    <property type="match status" value="1"/>
</dbReference>
<dbReference type="InterPro" id="IPR029098">
    <property type="entry name" value="Acetyltransf_C"/>
</dbReference>
<dbReference type="InterPro" id="IPR037157">
    <property type="entry name" value="Acetyltransf_C_sf"/>
</dbReference>
<dbReference type="InterPro" id="IPR001451">
    <property type="entry name" value="Hexapep"/>
</dbReference>
<dbReference type="InterPro" id="IPR018357">
    <property type="entry name" value="Hexapep_transf_CS"/>
</dbReference>
<dbReference type="InterPro" id="IPR010137">
    <property type="entry name" value="Lipid_A_LpxA"/>
</dbReference>
<dbReference type="InterPro" id="IPR011004">
    <property type="entry name" value="Trimer_LpxA-like_sf"/>
</dbReference>
<dbReference type="NCBIfam" id="TIGR01852">
    <property type="entry name" value="lipid_A_lpxA"/>
    <property type="match status" value="1"/>
</dbReference>
<dbReference type="NCBIfam" id="NF003657">
    <property type="entry name" value="PRK05289.1"/>
    <property type="match status" value="1"/>
</dbReference>
<dbReference type="PANTHER" id="PTHR43480">
    <property type="entry name" value="ACYL-[ACYL-CARRIER-PROTEIN]--UDP-N-ACETYLGLUCOSAMINE O-ACYLTRANSFERASE"/>
    <property type="match status" value="1"/>
</dbReference>
<dbReference type="PANTHER" id="PTHR43480:SF1">
    <property type="entry name" value="ACYL-[ACYL-CARRIER-PROTEIN]--UDP-N-ACETYLGLUCOSAMINE O-ACYLTRANSFERASE, MITOCHONDRIAL-RELATED"/>
    <property type="match status" value="1"/>
</dbReference>
<dbReference type="Pfam" id="PF13720">
    <property type="entry name" value="Acetyltransf_11"/>
    <property type="match status" value="1"/>
</dbReference>
<dbReference type="Pfam" id="PF00132">
    <property type="entry name" value="Hexapep"/>
    <property type="match status" value="2"/>
</dbReference>
<dbReference type="PIRSF" id="PIRSF000456">
    <property type="entry name" value="UDP-GlcNAc_acltr"/>
    <property type="match status" value="1"/>
</dbReference>
<dbReference type="SUPFAM" id="SSF51161">
    <property type="entry name" value="Trimeric LpxA-like enzymes"/>
    <property type="match status" value="1"/>
</dbReference>
<dbReference type="PROSITE" id="PS00101">
    <property type="entry name" value="HEXAPEP_TRANSFERASES"/>
    <property type="match status" value="2"/>
</dbReference>
<organism>
    <name type="scientific">Haemophilus influenzae (strain ATCC 51907 / DSM 11121 / KW20 / Rd)</name>
    <dbReference type="NCBI Taxonomy" id="71421"/>
    <lineage>
        <taxon>Bacteria</taxon>
        <taxon>Pseudomonadati</taxon>
        <taxon>Pseudomonadota</taxon>
        <taxon>Gammaproteobacteria</taxon>
        <taxon>Pasteurellales</taxon>
        <taxon>Pasteurellaceae</taxon>
        <taxon>Haemophilus</taxon>
    </lineage>
</organism>
<accession>P43887</accession>
<accession>P94806</accession>
<evidence type="ECO:0000255" key="1">
    <source>
        <dbReference type="HAMAP-Rule" id="MF_00387"/>
    </source>
</evidence>
<evidence type="ECO:0000305" key="2"/>
<sequence>MIHPSAKIHPTALIEEGAVIGEDVFIGPFCIIEGTVEIKARTVLKSHVVVRGDTVIGEDNEIYQFTSIGEVNQDLKYKGEATKTIIGNSNKIREHVTIHRGTIQGCGVTAIGNNNLLMINVHVAHDCQIKNNCILANNATLAGHVELDDFVIVGGMSAIHQFVIVGAHVMLGGGSMVSQDVPPYVMAQGNHARPFGVNLEGLKRRGFDKPTMHVIRNIYKMLYRSGKTLEEVLPEIEQIAETDSAISFFVEFFKRSTRGIIR</sequence>
<feature type="chain" id="PRO_0000188051" description="Acyl-[acyl-carrier-protein]--UDP-N-acetylglucosamine O-acyltransferase">
    <location>
        <begin position="1"/>
        <end position="262"/>
    </location>
</feature>
<feature type="sequence conflict" description="In Ref. 2; CAA60865." evidence="2" ref="2">
    <original>V</original>
    <variation>I</variation>
    <location>
        <position position="108"/>
    </location>
</feature>
<proteinExistence type="inferred from homology"/>
<protein>
    <recommendedName>
        <fullName evidence="1">Acyl-[acyl-carrier-protein]--UDP-N-acetylglucosamine O-acyltransferase</fullName>
        <shortName evidence="1">UDP-N-acetylglucosamine acyltransferase</shortName>
        <ecNumber evidence="1">2.3.1.129</ecNumber>
    </recommendedName>
</protein>
<reference key="1">
    <citation type="journal article" date="1995" name="Science">
        <title>Whole-genome random sequencing and assembly of Haemophilus influenzae Rd.</title>
        <authorList>
            <person name="Fleischmann R.D."/>
            <person name="Adams M.D."/>
            <person name="White O."/>
            <person name="Clayton R.A."/>
            <person name="Kirkness E.F."/>
            <person name="Kerlavage A.R."/>
            <person name="Bult C.J."/>
            <person name="Tomb J.-F."/>
            <person name="Dougherty B.A."/>
            <person name="Merrick J.M."/>
            <person name="McKenney K."/>
            <person name="Sutton G.G."/>
            <person name="FitzHugh W."/>
            <person name="Fields C.A."/>
            <person name="Gocayne J.D."/>
            <person name="Scott J.D."/>
            <person name="Shirley R."/>
            <person name="Liu L.-I."/>
            <person name="Glodek A."/>
            <person name="Kelley J.M."/>
            <person name="Weidman J.F."/>
            <person name="Phillips C.A."/>
            <person name="Spriggs T."/>
            <person name="Hedblom E."/>
            <person name="Cotton M.D."/>
            <person name="Utterback T.R."/>
            <person name="Hanna M.C."/>
            <person name="Nguyen D.T."/>
            <person name="Saudek D.M."/>
            <person name="Brandon R.C."/>
            <person name="Fine L.D."/>
            <person name="Fritchman J.L."/>
            <person name="Fuhrmann J.L."/>
            <person name="Geoghagen N.S.M."/>
            <person name="Gnehm C.L."/>
            <person name="McDonald L.A."/>
            <person name="Small K.V."/>
            <person name="Fraser C.M."/>
            <person name="Smith H.O."/>
            <person name="Venter J.C."/>
        </authorList>
    </citation>
    <scope>NUCLEOTIDE SEQUENCE [LARGE SCALE GENOMIC DNA]</scope>
    <source>
        <strain>ATCC 51907 / DSM 11121 / KW20 / Rd</strain>
    </source>
</reference>
<reference key="2">
    <citation type="journal article" date="1996" name="Gene">
        <title>Cloning and expression of genes encoding lipid A biosynthesis from Haemophilus influenzae type b.</title>
        <authorList>
            <person name="Servos S."/>
            <person name="Khan S."/>
            <person name="Maskell D."/>
        </authorList>
    </citation>
    <scope>NUCLEOTIDE SEQUENCE [GENOMIC DNA]</scope>
    <source>
        <strain>RM 7004 / Serotype B</strain>
    </source>
</reference>
<name>LPXA_HAEIN</name>